<sequence length="132" mass="14708">MCDAFVGTWKLVSSENFDDYMKEVGVGFATRKVAGMAKPNLIISVEGDLVVIRSESTFKNTEISFKLGVEFDEITPDDRKVKSIITLDGGVLVHVQKWDGKSTTIKKRRDGDKLVVECVMKGVTSTRVYERA</sequence>
<gene>
    <name type="primary">Fabp4</name>
</gene>
<protein>
    <recommendedName>
        <fullName>Fatty acid-binding protein, adipocyte</fullName>
    </recommendedName>
    <alternativeName>
        <fullName>Adipocyte lipid-binding protein</fullName>
        <shortName>ALBP</shortName>
    </alternativeName>
    <alternativeName>
        <fullName>Adipocyte-type fatty acid-binding protein</fullName>
        <shortName>A-FABP</shortName>
        <shortName>AFABP</shortName>
    </alternativeName>
    <alternativeName>
        <fullName>Fatty acid-binding protein 4</fullName>
    </alternativeName>
</protein>
<proteinExistence type="evidence at protein level"/>
<evidence type="ECO:0000250" key="1"/>
<evidence type="ECO:0000250" key="2">
    <source>
        <dbReference type="UniProtKB" id="P04117"/>
    </source>
</evidence>
<evidence type="ECO:0000250" key="3">
    <source>
        <dbReference type="UniProtKB" id="P15090"/>
    </source>
</evidence>
<evidence type="ECO:0000305" key="4"/>
<evidence type="ECO:0007744" key="5">
    <source>
    </source>
</evidence>
<organism>
    <name type="scientific">Rattus norvegicus</name>
    <name type="common">Rat</name>
    <dbReference type="NCBI Taxonomy" id="10116"/>
    <lineage>
        <taxon>Eukaryota</taxon>
        <taxon>Metazoa</taxon>
        <taxon>Chordata</taxon>
        <taxon>Craniata</taxon>
        <taxon>Vertebrata</taxon>
        <taxon>Euteleostomi</taxon>
        <taxon>Mammalia</taxon>
        <taxon>Eutheria</taxon>
        <taxon>Euarchontoglires</taxon>
        <taxon>Glires</taxon>
        <taxon>Rodentia</taxon>
        <taxon>Myomorpha</taxon>
        <taxon>Muroidea</taxon>
        <taxon>Muridae</taxon>
        <taxon>Murinae</taxon>
        <taxon>Rattus</taxon>
    </lineage>
</organism>
<accession>P70623</accession>
<reference key="1">
    <citation type="submission" date="1996-11" db="EMBL/GenBank/DDBJ databases">
        <authorList>
            <person name="Prinsen C."/>
            <person name="Veerkamp J.H."/>
        </authorList>
    </citation>
    <scope>NUCLEOTIDE SEQUENCE [MRNA]</scope>
</reference>
<reference key="2">
    <citation type="journal article" date="2012" name="Nat. Commun.">
        <title>Quantitative maps of protein phosphorylation sites across 14 different rat organs and tissues.</title>
        <authorList>
            <person name="Lundby A."/>
            <person name="Secher A."/>
            <person name="Lage K."/>
            <person name="Nordsborg N.B."/>
            <person name="Dmytriyev A."/>
            <person name="Lundby C."/>
            <person name="Olsen J.V."/>
        </authorList>
    </citation>
    <scope>PHOSPHORYLATION [LARGE SCALE ANALYSIS] AT SER-13</scope>
    <scope>IDENTIFICATION BY MASS SPECTROMETRY [LARGE SCALE ANALYSIS]</scope>
</reference>
<dbReference type="EMBL" id="U75581">
    <property type="protein sequence ID" value="AAB18344.1"/>
    <property type="molecule type" value="mRNA"/>
</dbReference>
<dbReference type="SMR" id="P70623"/>
<dbReference type="FunCoup" id="P70623">
    <property type="interactions" value="59"/>
</dbReference>
<dbReference type="STRING" id="10116.ENSRNOP00000073333"/>
<dbReference type="BindingDB" id="P70623"/>
<dbReference type="ChEMBL" id="CHEMBL2021755"/>
<dbReference type="GlyGen" id="P70623">
    <property type="glycosylation" value="1 site, 1 O-linked glycan (1 site)"/>
</dbReference>
<dbReference type="iPTMnet" id="P70623"/>
<dbReference type="PhosphoSitePlus" id="P70623"/>
<dbReference type="PaxDb" id="10116-ENSRNOP00000014701"/>
<dbReference type="UCSC" id="RGD:69309">
    <property type="organism name" value="rat"/>
</dbReference>
<dbReference type="AGR" id="RGD:69309"/>
<dbReference type="RGD" id="69309">
    <property type="gene designation" value="Fabp4"/>
</dbReference>
<dbReference type="eggNOG" id="KOG4015">
    <property type="taxonomic scope" value="Eukaryota"/>
</dbReference>
<dbReference type="InParanoid" id="P70623"/>
<dbReference type="PhylomeDB" id="P70623"/>
<dbReference type="Reactome" id="R-RNO-163560">
    <property type="pathway name" value="Triglyceride catabolism"/>
</dbReference>
<dbReference type="PRO" id="PR:P70623"/>
<dbReference type="Proteomes" id="UP000002494">
    <property type="component" value="Unplaced"/>
</dbReference>
<dbReference type="GO" id="GO:0005737">
    <property type="term" value="C:cytoplasm"/>
    <property type="evidence" value="ECO:0000266"/>
    <property type="project" value="RGD"/>
</dbReference>
<dbReference type="GO" id="GO:0005829">
    <property type="term" value="C:cytosol"/>
    <property type="evidence" value="ECO:0000318"/>
    <property type="project" value="GO_Central"/>
</dbReference>
<dbReference type="GO" id="GO:0005811">
    <property type="term" value="C:lipid droplet"/>
    <property type="evidence" value="ECO:0000304"/>
    <property type="project" value="Reactome"/>
</dbReference>
<dbReference type="GO" id="GO:0005634">
    <property type="term" value="C:nucleus"/>
    <property type="evidence" value="ECO:0000250"/>
    <property type="project" value="UniProtKB"/>
</dbReference>
<dbReference type="GO" id="GO:0005504">
    <property type="term" value="F:fatty acid binding"/>
    <property type="evidence" value="ECO:0000318"/>
    <property type="project" value="GO_Central"/>
</dbReference>
<dbReference type="GO" id="GO:0051427">
    <property type="term" value="F:hormone receptor binding"/>
    <property type="evidence" value="ECO:0000266"/>
    <property type="project" value="RGD"/>
</dbReference>
<dbReference type="GO" id="GO:0036041">
    <property type="term" value="F:long-chain fatty acid binding"/>
    <property type="evidence" value="ECO:0000250"/>
    <property type="project" value="UniProtKB"/>
</dbReference>
<dbReference type="GO" id="GO:0005324">
    <property type="term" value="F:long-chain fatty acid transmembrane transporter activity"/>
    <property type="evidence" value="ECO:0000250"/>
    <property type="project" value="UniProtKB"/>
</dbReference>
<dbReference type="GO" id="GO:0050873">
    <property type="term" value="P:brown fat cell differentiation"/>
    <property type="evidence" value="ECO:0000266"/>
    <property type="project" value="RGD"/>
</dbReference>
<dbReference type="GO" id="GO:0071285">
    <property type="term" value="P:cellular response to lithium ion"/>
    <property type="evidence" value="ECO:0000266"/>
    <property type="project" value="RGD"/>
</dbReference>
<dbReference type="GO" id="GO:0071356">
    <property type="term" value="P:cellular response to tumor necrosis factor"/>
    <property type="evidence" value="ECO:0000266"/>
    <property type="project" value="RGD"/>
</dbReference>
<dbReference type="GO" id="GO:0042632">
    <property type="term" value="P:cholesterol homeostasis"/>
    <property type="evidence" value="ECO:0000266"/>
    <property type="project" value="RGD"/>
</dbReference>
<dbReference type="GO" id="GO:0006631">
    <property type="term" value="P:fatty acid metabolic process"/>
    <property type="evidence" value="ECO:0000314"/>
    <property type="project" value="RGD"/>
</dbReference>
<dbReference type="GO" id="GO:0015908">
    <property type="term" value="P:fatty acid transport"/>
    <property type="evidence" value="ECO:0000318"/>
    <property type="project" value="GO_Central"/>
</dbReference>
<dbReference type="GO" id="GO:0015909">
    <property type="term" value="P:long-chain fatty acid transport"/>
    <property type="evidence" value="ECO:0000250"/>
    <property type="project" value="UniProtKB"/>
</dbReference>
<dbReference type="GO" id="GO:0045892">
    <property type="term" value="P:negative regulation of DNA-templated transcription"/>
    <property type="evidence" value="ECO:0000266"/>
    <property type="project" value="RGD"/>
</dbReference>
<dbReference type="GO" id="GO:0008284">
    <property type="term" value="P:positive regulation of cell population proliferation"/>
    <property type="evidence" value="ECO:0000315"/>
    <property type="project" value="RGD"/>
</dbReference>
<dbReference type="GO" id="GO:0120162">
    <property type="term" value="P:positive regulation of cold-induced thermogenesis"/>
    <property type="evidence" value="ECO:0000250"/>
    <property type="project" value="YuBioLab"/>
</dbReference>
<dbReference type="GO" id="GO:0070346">
    <property type="term" value="P:positive regulation of fat cell proliferation"/>
    <property type="evidence" value="ECO:0000266"/>
    <property type="project" value="RGD"/>
</dbReference>
<dbReference type="GO" id="GO:0050729">
    <property type="term" value="P:positive regulation of inflammatory response"/>
    <property type="evidence" value="ECO:0000266"/>
    <property type="project" value="RGD"/>
</dbReference>
<dbReference type="GO" id="GO:0009617">
    <property type="term" value="P:response to bacterium"/>
    <property type="evidence" value="ECO:0000266"/>
    <property type="project" value="RGD"/>
</dbReference>
<dbReference type="GO" id="GO:0051384">
    <property type="term" value="P:response to glucocorticoid"/>
    <property type="evidence" value="ECO:0000270"/>
    <property type="project" value="RGD"/>
</dbReference>
<dbReference type="GO" id="GO:0009629">
    <property type="term" value="P:response to gravity"/>
    <property type="evidence" value="ECO:0000270"/>
    <property type="project" value="RGD"/>
</dbReference>
<dbReference type="GO" id="GO:0009410">
    <property type="term" value="P:response to xenobiotic stimulus"/>
    <property type="evidence" value="ECO:0000270"/>
    <property type="project" value="RGD"/>
</dbReference>
<dbReference type="GO" id="GO:0050872">
    <property type="term" value="P:white fat cell differentiation"/>
    <property type="evidence" value="ECO:0000266"/>
    <property type="project" value="RGD"/>
</dbReference>
<dbReference type="FunFam" id="2.40.128.20:FF:000001">
    <property type="entry name" value="Fatty acid-binding protein, adipocyte"/>
    <property type="match status" value="1"/>
</dbReference>
<dbReference type="Gene3D" id="2.40.128.20">
    <property type="match status" value="1"/>
</dbReference>
<dbReference type="InterPro" id="IPR012674">
    <property type="entry name" value="Calycin"/>
</dbReference>
<dbReference type="InterPro" id="IPR000463">
    <property type="entry name" value="Fatty_acid-bd"/>
</dbReference>
<dbReference type="InterPro" id="IPR031259">
    <property type="entry name" value="ILBP"/>
</dbReference>
<dbReference type="InterPro" id="IPR000566">
    <property type="entry name" value="Lipocln_cytosolic_FA-bd_dom"/>
</dbReference>
<dbReference type="PANTHER" id="PTHR11955">
    <property type="entry name" value="FATTY ACID BINDING PROTEIN"/>
    <property type="match status" value="1"/>
</dbReference>
<dbReference type="Pfam" id="PF00061">
    <property type="entry name" value="Lipocalin"/>
    <property type="match status" value="1"/>
</dbReference>
<dbReference type="PRINTS" id="PR00178">
    <property type="entry name" value="FATTYACIDBP"/>
</dbReference>
<dbReference type="SUPFAM" id="SSF50814">
    <property type="entry name" value="Lipocalins"/>
    <property type="match status" value="1"/>
</dbReference>
<dbReference type="PROSITE" id="PS00214">
    <property type="entry name" value="FABP"/>
    <property type="match status" value="1"/>
</dbReference>
<keyword id="KW-0007">Acetylation</keyword>
<keyword id="KW-0963">Cytoplasm</keyword>
<keyword id="KW-0446">Lipid-binding</keyword>
<keyword id="KW-0539">Nucleus</keyword>
<keyword id="KW-0597">Phosphoprotein</keyword>
<keyword id="KW-1185">Reference proteome</keyword>
<keyword id="KW-0813">Transport</keyword>
<name>FABP4_RAT</name>
<feature type="initiator methionine" description="Removed" evidence="3">
    <location>
        <position position="1"/>
    </location>
</feature>
<feature type="chain" id="PRO_0000067369" description="Fatty acid-binding protein, adipocyte">
    <location>
        <begin position="2"/>
        <end position="132"/>
    </location>
</feature>
<feature type="short sequence motif" description="Nuclear localization signal" evidence="1">
    <location>
        <begin position="22"/>
        <end position="32"/>
    </location>
</feature>
<feature type="binding site" evidence="1">
    <location>
        <begin position="127"/>
        <end position="129"/>
    </location>
    <ligand>
        <name>a fatty acid</name>
        <dbReference type="ChEBI" id="CHEBI:28868"/>
    </ligand>
</feature>
<feature type="modified residue" description="N-acetylcysteine" evidence="3">
    <location>
        <position position="2"/>
    </location>
</feature>
<feature type="modified residue" description="Phosphoserine" evidence="5">
    <location>
        <position position="13"/>
    </location>
</feature>
<feature type="modified residue" description="Phosphotyrosine; by Tyr-kinases" evidence="1">
    <location>
        <position position="20"/>
    </location>
</feature>
<comment type="function">
    <text evidence="2">Lipid transport protein in adipocytes. Binds both long chain fatty acids and retinoic acid. Delivers long-chain fatty acids and retinoic acid to their cognate receptors in the nucleus.</text>
</comment>
<comment type="subunit">
    <text evidence="2 3">Monomer (By similarity). Homodimer. Interacts with PPARG (By similarity).</text>
</comment>
<comment type="subcellular location">
    <subcellularLocation>
        <location evidence="2">Cytoplasm</location>
    </subcellularLocation>
    <subcellularLocation>
        <location evidence="2">Nucleus</location>
    </subcellularLocation>
    <text evidence="2">Depending on the nature of the ligand, a conformation change exposes a nuclear localization motif and the protein is transported into the nucleus. Subject to constitutive nuclear export.</text>
</comment>
<comment type="domain">
    <text evidence="1">Forms a beta-barrel structure that accommodates the hydrophobic ligand in its interior.</text>
</comment>
<comment type="similarity">
    <text evidence="4">Belongs to the calycin superfamily. Fatty-acid binding protein (FABP) family.</text>
</comment>